<gene>
    <name type="primary">SEC232</name>
    <name type="ordered locus">CAGL0H00242g</name>
</gene>
<evidence type="ECO:0000250" key="1"/>
<evidence type="ECO:0000305" key="2"/>
<name>SC232_CANGA</name>
<proteinExistence type="inferred from homology"/>
<protein>
    <recommendedName>
        <fullName>Protein transport protein SEC23-2</fullName>
    </recommendedName>
</protein>
<feature type="chain" id="PRO_0000295457" description="Protein transport protein SEC23-2">
    <location>
        <begin position="1"/>
        <end position="757"/>
    </location>
</feature>
<feature type="binding site" evidence="1">
    <location>
        <position position="56"/>
    </location>
    <ligand>
        <name>Zn(2+)</name>
        <dbReference type="ChEBI" id="CHEBI:29105"/>
    </ligand>
</feature>
<feature type="binding site" evidence="1">
    <location>
        <position position="61"/>
    </location>
    <ligand>
        <name>Zn(2+)</name>
        <dbReference type="ChEBI" id="CHEBI:29105"/>
    </ligand>
</feature>
<feature type="binding site" evidence="1">
    <location>
        <position position="80"/>
    </location>
    <ligand>
        <name>Zn(2+)</name>
        <dbReference type="ChEBI" id="CHEBI:29105"/>
    </ligand>
</feature>
<feature type="binding site" evidence="1">
    <location>
        <position position="83"/>
    </location>
    <ligand>
        <name>Zn(2+)</name>
        <dbReference type="ChEBI" id="CHEBI:29105"/>
    </ligand>
</feature>
<accession>Q6FSI6</accession>
<reference key="1">
    <citation type="journal article" date="2004" name="Nature">
        <title>Genome evolution in yeasts.</title>
        <authorList>
            <person name="Dujon B."/>
            <person name="Sherman D."/>
            <person name="Fischer G."/>
            <person name="Durrens P."/>
            <person name="Casaregola S."/>
            <person name="Lafontaine I."/>
            <person name="de Montigny J."/>
            <person name="Marck C."/>
            <person name="Neuveglise C."/>
            <person name="Talla E."/>
            <person name="Goffard N."/>
            <person name="Frangeul L."/>
            <person name="Aigle M."/>
            <person name="Anthouard V."/>
            <person name="Babour A."/>
            <person name="Barbe V."/>
            <person name="Barnay S."/>
            <person name="Blanchin S."/>
            <person name="Beckerich J.-M."/>
            <person name="Beyne E."/>
            <person name="Bleykasten C."/>
            <person name="Boisrame A."/>
            <person name="Boyer J."/>
            <person name="Cattolico L."/>
            <person name="Confanioleri F."/>
            <person name="de Daruvar A."/>
            <person name="Despons L."/>
            <person name="Fabre E."/>
            <person name="Fairhead C."/>
            <person name="Ferry-Dumazet H."/>
            <person name="Groppi A."/>
            <person name="Hantraye F."/>
            <person name="Hennequin C."/>
            <person name="Jauniaux N."/>
            <person name="Joyet P."/>
            <person name="Kachouri R."/>
            <person name="Kerrest A."/>
            <person name="Koszul R."/>
            <person name="Lemaire M."/>
            <person name="Lesur I."/>
            <person name="Ma L."/>
            <person name="Muller H."/>
            <person name="Nicaud J.-M."/>
            <person name="Nikolski M."/>
            <person name="Oztas S."/>
            <person name="Ozier-Kalogeropoulos O."/>
            <person name="Pellenz S."/>
            <person name="Potier S."/>
            <person name="Richard G.-F."/>
            <person name="Straub M.-L."/>
            <person name="Suleau A."/>
            <person name="Swennen D."/>
            <person name="Tekaia F."/>
            <person name="Wesolowski-Louvel M."/>
            <person name="Westhof E."/>
            <person name="Wirth B."/>
            <person name="Zeniou-Meyer M."/>
            <person name="Zivanovic Y."/>
            <person name="Bolotin-Fukuhara M."/>
            <person name="Thierry A."/>
            <person name="Bouchier C."/>
            <person name="Caudron B."/>
            <person name="Scarpelli C."/>
            <person name="Gaillardin C."/>
            <person name="Weissenbach J."/>
            <person name="Wincker P."/>
            <person name="Souciet J.-L."/>
        </authorList>
    </citation>
    <scope>NUCLEOTIDE SEQUENCE [LARGE SCALE GENOMIC DNA]</scope>
    <source>
        <strain>ATCC 2001 / BCRC 20586 / JCM 3761 / NBRC 0622 / NRRL Y-65 / CBS 138</strain>
    </source>
</reference>
<organism>
    <name type="scientific">Candida glabrata (strain ATCC 2001 / BCRC 20586 / JCM 3761 / NBRC 0622 / NRRL Y-65 / CBS 138)</name>
    <name type="common">Yeast</name>
    <name type="synonym">Nakaseomyces glabratus</name>
    <dbReference type="NCBI Taxonomy" id="284593"/>
    <lineage>
        <taxon>Eukaryota</taxon>
        <taxon>Fungi</taxon>
        <taxon>Dikarya</taxon>
        <taxon>Ascomycota</taxon>
        <taxon>Saccharomycotina</taxon>
        <taxon>Saccharomycetes</taxon>
        <taxon>Saccharomycetales</taxon>
        <taxon>Saccharomycetaceae</taxon>
        <taxon>Nakaseomyces</taxon>
    </lineage>
</organism>
<sequence>MDFEANEDLNGVRFSWNVFPSSKTDANKNVVPVGCLYTPLKEIEDLQIASYNPVVCAGPQCKAILNPYCAIDPRSSSWTCPICNSRNHLPPQYANMTQENMPIELQQTTVEYITNKPVQIPPIFFFVVDITAEQENLDALKESIITSLSLLPPNALIGFMTYGNVVQLYDLSCDIIERCSVFRGDREYQFDQLVEMLTGQKPSNTMAPLANGKITPLSLNRFFLPLEQVEFKLNQLLESMSPDQWSVPAGHRPLRATGSALNIATLLLQGCYKNVASRIILFASGPGTVAPGLIVNTELKDPIRSHHDIDSDRAPHYKKACKFYNSIAERVAENGHTVDVFAGCYDQVGMSEMKKMTDSTGGVLLLTDAFSTAIFKQSYLRLFSKDEEGYLTMVFNGNLAVKTSKDLKLQGLIGHASAVKKTDATNVSDSEIGIGSTSVWKMSALSPHHTYGIFFEIANPNAVSPITTDRANLAYTQFITQYQHASGTNRVRVTTVANQMLPFGTPAIAASFDQEAAAVLMARIAVFKAETDDGADVIRWLDRTLIKLCQKYADYNKDDPASFRLAPNFSLYPQFTYYLRRSQFLSVFNNSPDETAFYRHIFTREDTTNSLIMIQPTLTSFSMEEDPQPVLLDSISVKPNTILLLDTFFFILIYHGEQIAQWRKAGYQDDPQYADFKALLEEPKVEAAELLVDRFPLPRFIDTEAGGSQARFLLSKLNPSDNYQDMARGGSTIVLTDDVSLQNFMAHLQQVTVSGQP</sequence>
<comment type="function">
    <text evidence="1">Component of the coat protein complex II (COPII) which promotes the formation of transport vesicles from the endoplasmic reticulum (ER). The coat has two main functions, the physical deformation of the endoplasmic reticulum membrane into vesicles and the selection of cargo molecules (By similarity).</text>
</comment>
<comment type="subunit">
    <text evidence="1">The COPII coat is composed of at least 5 proteins: the SEC23/24 complex, the SEC13/31 complex, and the protein SAR1.</text>
</comment>
<comment type="subcellular location">
    <subcellularLocation>
        <location evidence="1">Cytoplasm</location>
    </subcellularLocation>
    <subcellularLocation>
        <location evidence="1">Cytoplasmic vesicle</location>
        <location evidence="1">COPII-coated vesicle membrane</location>
        <topology evidence="1">Peripheral membrane protein</topology>
        <orientation evidence="1">Cytoplasmic side</orientation>
    </subcellularLocation>
    <subcellularLocation>
        <location evidence="1">Endoplasmic reticulum membrane</location>
        <topology evidence="1">Peripheral membrane protein</topology>
        <orientation evidence="1">Cytoplasmic side</orientation>
    </subcellularLocation>
    <subcellularLocation>
        <location evidence="1">Golgi apparatus membrane</location>
        <topology evidence="1">Peripheral membrane protein</topology>
        <orientation evidence="1">Cytoplasmic side</orientation>
    </subcellularLocation>
</comment>
<comment type="similarity">
    <text evidence="2">Belongs to the SEC23/SEC24 family. SEC23 subfamily.</text>
</comment>
<keyword id="KW-0963">Cytoplasm</keyword>
<keyword id="KW-0968">Cytoplasmic vesicle</keyword>
<keyword id="KW-0256">Endoplasmic reticulum</keyword>
<keyword id="KW-0931">ER-Golgi transport</keyword>
<keyword id="KW-0333">Golgi apparatus</keyword>
<keyword id="KW-0472">Membrane</keyword>
<keyword id="KW-0479">Metal-binding</keyword>
<keyword id="KW-0653">Protein transport</keyword>
<keyword id="KW-1185">Reference proteome</keyword>
<keyword id="KW-0813">Transport</keyword>
<keyword id="KW-0862">Zinc</keyword>
<dbReference type="EMBL" id="CR380954">
    <property type="protein sequence ID" value="CAG59739.1"/>
    <property type="molecule type" value="Genomic_DNA"/>
</dbReference>
<dbReference type="RefSeq" id="XP_446808.1">
    <property type="nucleotide sequence ID" value="XM_446808.1"/>
</dbReference>
<dbReference type="SMR" id="Q6FSI6"/>
<dbReference type="FunCoup" id="Q6FSI6">
    <property type="interactions" value="1117"/>
</dbReference>
<dbReference type="STRING" id="284593.Q6FSI6"/>
<dbReference type="EnsemblFungi" id="CAGL0H00242g-T">
    <property type="protein sequence ID" value="CAGL0H00242g-T-p1"/>
    <property type="gene ID" value="CAGL0H00242g"/>
</dbReference>
<dbReference type="KEGG" id="cgr:2888615"/>
<dbReference type="CGD" id="CAL0132036">
    <property type="gene designation" value="CAGL0H00242g"/>
</dbReference>
<dbReference type="VEuPathDB" id="FungiDB:CAGL0H00242g"/>
<dbReference type="eggNOG" id="KOG1986">
    <property type="taxonomic scope" value="Eukaryota"/>
</dbReference>
<dbReference type="HOGENOM" id="CLU_008658_3_0_1"/>
<dbReference type="InParanoid" id="Q6FSI6"/>
<dbReference type="OMA" id="FPPHYAE"/>
<dbReference type="Proteomes" id="UP000002428">
    <property type="component" value="Chromosome H"/>
</dbReference>
<dbReference type="GO" id="GO:0030127">
    <property type="term" value="C:COPII vesicle coat"/>
    <property type="evidence" value="ECO:0007669"/>
    <property type="project" value="EnsemblFungi"/>
</dbReference>
<dbReference type="GO" id="GO:0070971">
    <property type="term" value="C:endoplasmic reticulum exit site"/>
    <property type="evidence" value="ECO:0007669"/>
    <property type="project" value="TreeGrafter"/>
</dbReference>
<dbReference type="GO" id="GO:0005789">
    <property type="term" value="C:endoplasmic reticulum membrane"/>
    <property type="evidence" value="ECO:0007669"/>
    <property type="project" value="UniProtKB-SubCell"/>
</dbReference>
<dbReference type="GO" id="GO:0000139">
    <property type="term" value="C:Golgi membrane"/>
    <property type="evidence" value="ECO:0007669"/>
    <property type="project" value="UniProtKB-SubCell"/>
</dbReference>
<dbReference type="GO" id="GO:0005096">
    <property type="term" value="F:GTPase activator activity"/>
    <property type="evidence" value="ECO:0007669"/>
    <property type="project" value="EnsemblFungi"/>
</dbReference>
<dbReference type="GO" id="GO:0008270">
    <property type="term" value="F:zinc ion binding"/>
    <property type="evidence" value="ECO:0007669"/>
    <property type="project" value="InterPro"/>
</dbReference>
<dbReference type="GO" id="GO:0090110">
    <property type="term" value="P:COPII-coated vesicle cargo loading"/>
    <property type="evidence" value="ECO:0007669"/>
    <property type="project" value="EnsemblFungi"/>
</dbReference>
<dbReference type="GO" id="GO:0006886">
    <property type="term" value="P:intracellular protein transport"/>
    <property type="evidence" value="ECO:0007669"/>
    <property type="project" value="EnsemblFungi"/>
</dbReference>
<dbReference type="GO" id="GO:1902953">
    <property type="term" value="P:positive regulation of ER to Golgi vesicle-mediated transport"/>
    <property type="evidence" value="ECO:0007669"/>
    <property type="project" value="EnsemblFungi"/>
</dbReference>
<dbReference type="GO" id="GO:0070863">
    <property type="term" value="P:positive regulation of protein exit from endoplasmic reticulum"/>
    <property type="evidence" value="ECO:0007669"/>
    <property type="project" value="EnsemblFungi"/>
</dbReference>
<dbReference type="GO" id="GO:0003400">
    <property type="term" value="P:regulation of COPII vesicle coating"/>
    <property type="evidence" value="ECO:0007669"/>
    <property type="project" value="EnsemblFungi"/>
</dbReference>
<dbReference type="GO" id="GO:0061709">
    <property type="term" value="P:reticulophagy"/>
    <property type="evidence" value="ECO:0007669"/>
    <property type="project" value="EnsemblFungi"/>
</dbReference>
<dbReference type="CDD" id="cd11287">
    <property type="entry name" value="Sec23_C"/>
    <property type="match status" value="1"/>
</dbReference>
<dbReference type="FunFam" id="1.20.120.730:FF:000001">
    <property type="entry name" value="Protein transport protein SEC23"/>
    <property type="match status" value="1"/>
</dbReference>
<dbReference type="FunFam" id="2.30.30.380:FF:000001">
    <property type="entry name" value="Protein transport protein SEC23"/>
    <property type="match status" value="1"/>
</dbReference>
<dbReference type="FunFam" id="3.40.20.10:FF:000006">
    <property type="entry name" value="Protein transport protein SEC23"/>
    <property type="match status" value="1"/>
</dbReference>
<dbReference type="FunFam" id="3.40.50.410:FF:000008">
    <property type="entry name" value="Protein transport protein SEC23"/>
    <property type="match status" value="1"/>
</dbReference>
<dbReference type="Gene3D" id="2.60.40.1670">
    <property type="entry name" value="beta-sandwich domain of Sec23/24"/>
    <property type="match status" value="1"/>
</dbReference>
<dbReference type="Gene3D" id="1.20.120.730">
    <property type="entry name" value="Sec23/Sec24 helical domain"/>
    <property type="match status" value="1"/>
</dbReference>
<dbReference type="Gene3D" id="3.40.20.10">
    <property type="entry name" value="Severin"/>
    <property type="match status" value="1"/>
</dbReference>
<dbReference type="Gene3D" id="3.40.50.410">
    <property type="entry name" value="von Willebrand factor, type A domain"/>
    <property type="match status" value="1"/>
</dbReference>
<dbReference type="Gene3D" id="2.30.30.380">
    <property type="entry name" value="Zn-finger domain of Sec23/24"/>
    <property type="match status" value="1"/>
</dbReference>
<dbReference type="InterPro" id="IPR029006">
    <property type="entry name" value="ADF-H/Gelsolin-like_dom_sf"/>
</dbReference>
<dbReference type="InterPro" id="IPR007123">
    <property type="entry name" value="Gelsolin-like_dom"/>
</dbReference>
<dbReference type="InterPro" id="IPR036180">
    <property type="entry name" value="Gelsolin-like_dom_sf"/>
</dbReference>
<dbReference type="InterPro" id="IPR037364">
    <property type="entry name" value="Sec23"/>
</dbReference>
<dbReference type="InterPro" id="IPR006900">
    <property type="entry name" value="Sec23/24_helical_dom"/>
</dbReference>
<dbReference type="InterPro" id="IPR036175">
    <property type="entry name" value="Sec23/24_helical_dom_sf"/>
</dbReference>
<dbReference type="InterPro" id="IPR006896">
    <property type="entry name" value="Sec23/24_trunk_dom"/>
</dbReference>
<dbReference type="InterPro" id="IPR012990">
    <property type="entry name" value="Sec23_24_beta_S"/>
</dbReference>
<dbReference type="InterPro" id="IPR037550">
    <property type="entry name" value="Sec23_C"/>
</dbReference>
<dbReference type="InterPro" id="IPR036465">
    <property type="entry name" value="vWFA_dom_sf"/>
</dbReference>
<dbReference type="InterPro" id="IPR006895">
    <property type="entry name" value="Znf_Sec23_Sec24"/>
</dbReference>
<dbReference type="InterPro" id="IPR036174">
    <property type="entry name" value="Znf_Sec23_Sec24_sf"/>
</dbReference>
<dbReference type="PANTHER" id="PTHR11141">
    <property type="entry name" value="PROTEIN TRANSPORT PROTEIN SEC23"/>
    <property type="match status" value="1"/>
</dbReference>
<dbReference type="PANTHER" id="PTHR11141:SF0">
    <property type="entry name" value="PROTEIN TRANSPORT PROTEIN SEC23"/>
    <property type="match status" value="1"/>
</dbReference>
<dbReference type="Pfam" id="PF00626">
    <property type="entry name" value="Gelsolin"/>
    <property type="match status" value="1"/>
</dbReference>
<dbReference type="Pfam" id="PF08033">
    <property type="entry name" value="Sec23_BS"/>
    <property type="match status" value="1"/>
</dbReference>
<dbReference type="Pfam" id="PF04815">
    <property type="entry name" value="Sec23_helical"/>
    <property type="match status" value="1"/>
</dbReference>
<dbReference type="Pfam" id="PF04811">
    <property type="entry name" value="Sec23_trunk"/>
    <property type="match status" value="1"/>
</dbReference>
<dbReference type="Pfam" id="PF04810">
    <property type="entry name" value="zf-Sec23_Sec24"/>
    <property type="match status" value="1"/>
</dbReference>
<dbReference type="SUPFAM" id="SSF81995">
    <property type="entry name" value="beta-sandwich domain of Sec23/24"/>
    <property type="match status" value="1"/>
</dbReference>
<dbReference type="SUPFAM" id="SSF82754">
    <property type="entry name" value="C-terminal, gelsolin-like domain of Sec23/24"/>
    <property type="match status" value="1"/>
</dbReference>
<dbReference type="SUPFAM" id="SSF81811">
    <property type="entry name" value="Helical domain of Sec23/24"/>
    <property type="match status" value="1"/>
</dbReference>
<dbReference type="SUPFAM" id="SSF53300">
    <property type="entry name" value="vWA-like"/>
    <property type="match status" value="1"/>
</dbReference>
<dbReference type="SUPFAM" id="SSF82919">
    <property type="entry name" value="Zn-finger domain of Sec23/24"/>
    <property type="match status" value="1"/>
</dbReference>